<comment type="function">
    <text evidence="2">Guanine-nucleotide-releasing protein that acts on members of the sec4/ypt1/rab subfamily such as Rab8. During egg development, essential for establishing and maintaining epithelial cell polarity by regulating the correct polarized deposition of basal membrane (BM) proteins such as trol/Pcan and vkg/Coll IV to the basal surface of follicular epithelial (FE) cells. Likely to function by restricting the activity of the vesicle transport regulator Rab8 to the basal membrane, and thus directs BM protein-containing vesicles to the basal side of the FE cells. This function is independent of the Crag/Rab10 regulation of polarized BM protein secretion in the FE.</text>
</comment>
<comment type="subunit">
    <text evidence="2">Interacts with Rab8.</text>
</comment>
<comment type="interaction">
    <interactant intactId="EBI-179169">
        <id>Q9VLP3</id>
    </interactant>
    <interactant intactId="EBI-16027637">
        <id>O15971</id>
        <label>Rab10</label>
    </interactant>
    <organismsDiffer>false</organismsDiffer>
    <experiments>3</experiments>
</comment>
<comment type="interaction">
    <interactant intactId="EBI-179169">
        <id>Q9VLP3</id>
    </interactant>
    <interactant intactId="EBI-123963">
        <id>O18338</id>
        <label>Rab8</label>
    </interactant>
    <organismsDiffer>false</organismsDiffer>
    <experiments>4</experiments>
</comment>
<comment type="subcellular location">
    <subcellularLocation>
        <location evidence="2">Basal cell membrane</location>
        <topology evidence="2">Peripheral membrane protein</topology>
    </subcellularLocation>
    <text evidence="2">Diffuse intracellular localization early in oogenesis which later becomes basally enriched in follicular epithelial cells.</text>
</comment>
<comment type="disruption phenotype">
    <text evidence="2">RNAi-mediated knockdown in follicle cells results in the apical localization of the basal membrane (BM) proteins trol and vkg. Results in the apical secretion of vkg, which associates with the apical plasma membrane with an adherent organization. No effect of the localization of proteins involved in intracellular trafficking such as aPKC, dlg and arm.</text>
</comment>
<comment type="miscellaneous">
    <text evidence="2">The name stratum (strat) refers to the geological term for a layer of rock as mutants accumulate basal membrane proteins as a continuous apical sheet/layer. The name also highlights the similarity of the mislocalization phenotype to Crag mutant cells, as both names are based upon geological descriptions of rock formations.</text>
</comment>
<comment type="similarity">
    <text evidence="1">Belongs to the DSS4/MSS4 family.</text>
</comment>
<reference key="1">
    <citation type="journal article" date="2000" name="Science">
        <title>The genome sequence of Drosophila melanogaster.</title>
        <authorList>
            <person name="Adams M.D."/>
            <person name="Celniker S.E."/>
            <person name="Holt R.A."/>
            <person name="Evans C.A."/>
            <person name="Gocayne J.D."/>
            <person name="Amanatides P.G."/>
            <person name="Scherer S.E."/>
            <person name="Li P.W."/>
            <person name="Hoskins R.A."/>
            <person name="Galle R.F."/>
            <person name="George R.A."/>
            <person name="Lewis S.E."/>
            <person name="Richards S."/>
            <person name="Ashburner M."/>
            <person name="Henderson S.N."/>
            <person name="Sutton G.G."/>
            <person name="Wortman J.R."/>
            <person name="Yandell M.D."/>
            <person name="Zhang Q."/>
            <person name="Chen L.X."/>
            <person name="Brandon R.C."/>
            <person name="Rogers Y.-H.C."/>
            <person name="Blazej R.G."/>
            <person name="Champe M."/>
            <person name="Pfeiffer B.D."/>
            <person name="Wan K.H."/>
            <person name="Doyle C."/>
            <person name="Baxter E.G."/>
            <person name="Helt G."/>
            <person name="Nelson C.R."/>
            <person name="Miklos G.L.G."/>
            <person name="Abril J.F."/>
            <person name="Agbayani A."/>
            <person name="An H.-J."/>
            <person name="Andrews-Pfannkoch C."/>
            <person name="Baldwin D."/>
            <person name="Ballew R.M."/>
            <person name="Basu A."/>
            <person name="Baxendale J."/>
            <person name="Bayraktaroglu L."/>
            <person name="Beasley E.M."/>
            <person name="Beeson K.Y."/>
            <person name="Benos P.V."/>
            <person name="Berman B.P."/>
            <person name="Bhandari D."/>
            <person name="Bolshakov S."/>
            <person name="Borkova D."/>
            <person name="Botchan M.R."/>
            <person name="Bouck J."/>
            <person name="Brokstein P."/>
            <person name="Brottier P."/>
            <person name="Burtis K.C."/>
            <person name="Busam D.A."/>
            <person name="Butler H."/>
            <person name="Cadieu E."/>
            <person name="Center A."/>
            <person name="Chandra I."/>
            <person name="Cherry J.M."/>
            <person name="Cawley S."/>
            <person name="Dahlke C."/>
            <person name="Davenport L.B."/>
            <person name="Davies P."/>
            <person name="de Pablos B."/>
            <person name="Delcher A."/>
            <person name="Deng Z."/>
            <person name="Mays A.D."/>
            <person name="Dew I."/>
            <person name="Dietz S.M."/>
            <person name="Dodson K."/>
            <person name="Doup L.E."/>
            <person name="Downes M."/>
            <person name="Dugan-Rocha S."/>
            <person name="Dunkov B.C."/>
            <person name="Dunn P."/>
            <person name="Durbin K.J."/>
            <person name="Evangelista C.C."/>
            <person name="Ferraz C."/>
            <person name="Ferriera S."/>
            <person name="Fleischmann W."/>
            <person name="Fosler C."/>
            <person name="Gabrielian A.E."/>
            <person name="Garg N.S."/>
            <person name="Gelbart W.M."/>
            <person name="Glasser K."/>
            <person name="Glodek A."/>
            <person name="Gong F."/>
            <person name="Gorrell J.H."/>
            <person name="Gu Z."/>
            <person name="Guan P."/>
            <person name="Harris M."/>
            <person name="Harris N.L."/>
            <person name="Harvey D.A."/>
            <person name="Heiman T.J."/>
            <person name="Hernandez J.R."/>
            <person name="Houck J."/>
            <person name="Hostin D."/>
            <person name="Houston K.A."/>
            <person name="Howland T.J."/>
            <person name="Wei M.-H."/>
            <person name="Ibegwam C."/>
            <person name="Jalali M."/>
            <person name="Kalush F."/>
            <person name="Karpen G.H."/>
            <person name="Ke Z."/>
            <person name="Kennison J.A."/>
            <person name="Ketchum K.A."/>
            <person name="Kimmel B.E."/>
            <person name="Kodira C.D."/>
            <person name="Kraft C.L."/>
            <person name="Kravitz S."/>
            <person name="Kulp D."/>
            <person name="Lai Z."/>
            <person name="Lasko P."/>
            <person name="Lei Y."/>
            <person name="Levitsky A.A."/>
            <person name="Li J.H."/>
            <person name="Li Z."/>
            <person name="Liang Y."/>
            <person name="Lin X."/>
            <person name="Liu X."/>
            <person name="Mattei B."/>
            <person name="McIntosh T.C."/>
            <person name="McLeod M.P."/>
            <person name="McPherson D."/>
            <person name="Merkulov G."/>
            <person name="Milshina N.V."/>
            <person name="Mobarry C."/>
            <person name="Morris J."/>
            <person name="Moshrefi A."/>
            <person name="Mount S.M."/>
            <person name="Moy M."/>
            <person name="Murphy B."/>
            <person name="Murphy L."/>
            <person name="Muzny D.M."/>
            <person name="Nelson D.L."/>
            <person name="Nelson D.R."/>
            <person name="Nelson K.A."/>
            <person name="Nixon K."/>
            <person name="Nusskern D.R."/>
            <person name="Pacleb J.M."/>
            <person name="Palazzolo M."/>
            <person name="Pittman G.S."/>
            <person name="Pan S."/>
            <person name="Pollard J."/>
            <person name="Puri V."/>
            <person name="Reese M.G."/>
            <person name="Reinert K."/>
            <person name="Remington K."/>
            <person name="Saunders R.D.C."/>
            <person name="Scheeler F."/>
            <person name="Shen H."/>
            <person name="Shue B.C."/>
            <person name="Siden-Kiamos I."/>
            <person name="Simpson M."/>
            <person name="Skupski M.P."/>
            <person name="Smith T.J."/>
            <person name="Spier E."/>
            <person name="Spradling A.C."/>
            <person name="Stapleton M."/>
            <person name="Strong R."/>
            <person name="Sun E."/>
            <person name="Svirskas R."/>
            <person name="Tector C."/>
            <person name="Turner R."/>
            <person name="Venter E."/>
            <person name="Wang A.H."/>
            <person name="Wang X."/>
            <person name="Wang Z.-Y."/>
            <person name="Wassarman D.A."/>
            <person name="Weinstock G.M."/>
            <person name="Weissenbach J."/>
            <person name="Williams S.M."/>
            <person name="Woodage T."/>
            <person name="Worley K.C."/>
            <person name="Wu D."/>
            <person name="Yang S."/>
            <person name="Yao Q.A."/>
            <person name="Ye J."/>
            <person name="Yeh R.-F."/>
            <person name="Zaveri J.S."/>
            <person name="Zhan M."/>
            <person name="Zhang G."/>
            <person name="Zhao Q."/>
            <person name="Zheng L."/>
            <person name="Zheng X.H."/>
            <person name="Zhong F.N."/>
            <person name="Zhong W."/>
            <person name="Zhou X."/>
            <person name="Zhu S.C."/>
            <person name="Zhu X."/>
            <person name="Smith H.O."/>
            <person name="Gibbs R.A."/>
            <person name="Myers E.W."/>
            <person name="Rubin G.M."/>
            <person name="Venter J.C."/>
        </authorList>
    </citation>
    <scope>NUCLEOTIDE SEQUENCE [LARGE SCALE GENOMIC DNA]</scope>
    <source>
        <strain>Berkeley</strain>
    </source>
</reference>
<reference key="2">
    <citation type="journal article" date="2002" name="Genome Biol.">
        <title>Annotation of the Drosophila melanogaster euchromatic genome: a systematic review.</title>
        <authorList>
            <person name="Misra S."/>
            <person name="Crosby M.A."/>
            <person name="Mungall C.J."/>
            <person name="Matthews B.B."/>
            <person name="Campbell K.S."/>
            <person name="Hradecky P."/>
            <person name="Huang Y."/>
            <person name="Kaminker J.S."/>
            <person name="Millburn G.H."/>
            <person name="Prochnik S.E."/>
            <person name="Smith C.D."/>
            <person name="Tupy J.L."/>
            <person name="Whitfield E.J."/>
            <person name="Bayraktaroglu L."/>
            <person name="Berman B.P."/>
            <person name="Bettencourt B.R."/>
            <person name="Celniker S.E."/>
            <person name="de Grey A.D.N.J."/>
            <person name="Drysdale R.A."/>
            <person name="Harris N.L."/>
            <person name="Richter J."/>
            <person name="Russo S."/>
            <person name="Schroeder A.J."/>
            <person name="Shu S.Q."/>
            <person name="Stapleton M."/>
            <person name="Yamada C."/>
            <person name="Ashburner M."/>
            <person name="Gelbart W.M."/>
            <person name="Rubin G.M."/>
            <person name="Lewis S.E."/>
        </authorList>
    </citation>
    <scope>GENOME REANNOTATION</scope>
    <source>
        <strain>Berkeley</strain>
    </source>
</reference>
<reference key="3">
    <citation type="journal article" date="2002" name="Genome Biol.">
        <title>A Drosophila full-length cDNA resource.</title>
        <authorList>
            <person name="Stapleton M."/>
            <person name="Carlson J.W."/>
            <person name="Brokstein P."/>
            <person name="Yu C."/>
            <person name="Champe M."/>
            <person name="George R.A."/>
            <person name="Guarin H."/>
            <person name="Kronmiller B."/>
            <person name="Pacleb J.M."/>
            <person name="Park S."/>
            <person name="Wan K.H."/>
            <person name="Rubin G.M."/>
            <person name="Celniker S.E."/>
        </authorList>
    </citation>
    <scope>NUCLEOTIDE SEQUENCE [LARGE SCALE MRNA]</scope>
    <source>
        <strain>Berkeley</strain>
        <tissue>Embryo</tissue>
    </source>
</reference>
<reference key="4">
    <citation type="journal article" date="2017" name="Cell Rep.">
        <title>Stratum, a Homolog of the Human GEF Mss4, Partnered with Rab8, Controls the Basal Restriction of Basement Membrane Proteins in Epithelial Cells.</title>
        <authorList>
            <person name="Devergne O."/>
            <person name="Sun G.H."/>
            <person name="Schuepbach T."/>
        </authorList>
    </citation>
    <scope>FUNCTION</scope>
    <scope>INTERACTION WITH RAB8</scope>
    <scope>SUBCELLULAR LOCATION</scope>
    <scope>DISRUPTION PHENOTYPE</scope>
</reference>
<dbReference type="EMBL" id="AE014134">
    <property type="protein sequence ID" value="AAF52641.2"/>
    <property type="molecule type" value="Genomic_DNA"/>
</dbReference>
<dbReference type="EMBL" id="BT001655">
    <property type="protein sequence ID" value="AAN71410.1"/>
    <property type="molecule type" value="mRNA"/>
</dbReference>
<dbReference type="RefSeq" id="NP_609209.2">
    <property type="nucleotide sequence ID" value="NM_135365.3"/>
</dbReference>
<dbReference type="SMR" id="Q9VLP3"/>
<dbReference type="BioGRID" id="60268">
    <property type="interactions" value="29"/>
</dbReference>
<dbReference type="DIP" id="DIP-17817N"/>
<dbReference type="FunCoup" id="Q9VLP3">
    <property type="interactions" value="1163"/>
</dbReference>
<dbReference type="IntAct" id="Q9VLP3">
    <property type="interactions" value="21"/>
</dbReference>
<dbReference type="STRING" id="7227.FBpp0079221"/>
<dbReference type="PaxDb" id="7227-FBpp0079221"/>
<dbReference type="DNASU" id="34142"/>
<dbReference type="EnsemblMetazoa" id="FBtr0079601">
    <property type="protein sequence ID" value="FBpp0079221"/>
    <property type="gene ID" value="FBgn0032020"/>
</dbReference>
<dbReference type="GeneID" id="34142"/>
<dbReference type="KEGG" id="dme:Dmel_CG7787"/>
<dbReference type="UCSC" id="CG7787-RA">
    <property type="organism name" value="d. melanogaster"/>
</dbReference>
<dbReference type="AGR" id="FB:FBgn0032020"/>
<dbReference type="CTD" id="34142"/>
<dbReference type="FlyBase" id="FBgn0032020">
    <property type="gene designation" value="strat"/>
</dbReference>
<dbReference type="VEuPathDB" id="VectorBase:FBgn0032020"/>
<dbReference type="eggNOG" id="KOG4113">
    <property type="taxonomic scope" value="Eukaryota"/>
</dbReference>
<dbReference type="GeneTree" id="ENSGT00390000016889"/>
<dbReference type="HOGENOM" id="CLU_132754_0_0_1"/>
<dbReference type="InParanoid" id="Q9VLP3"/>
<dbReference type="OMA" id="VPLMMQK"/>
<dbReference type="OrthoDB" id="30840at2759"/>
<dbReference type="PhylomeDB" id="Q9VLP3"/>
<dbReference type="BioGRID-ORCS" id="34142">
    <property type="hits" value="1 hit in 1 CRISPR screen"/>
</dbReference>
<dbReference type="GenomeRNAi" id="34142"/>
<dbReference type="PRO" id="PR:Q9VLP3"/>
<dbReference type="Proteomes" id="UP000000803">
    <property type="component" value="Chromosome 2L"/>
</dbReference>
<dbReference type="Bgee" id="FBgn0032020">
    <property type="expression patterns" value="Expressed in adult posterior midgut class II enteroendocrine cell in adult midgut (Drosophila) and 98 other cell types or tissues"/>
</dbReference>
<dbReference type="ExpressionAtlas" id="Q9VLP3">
    <property type="expression patterns" value="baseline and differential"/>
</dbReference>
<dbReference type="GO" id="GO:0045180">
    <property type="term" value="C:basal cortex"/>
    <property type="evidence" value="ECO:0000314"/>
    <property type="project" value="FlyBase"/>
</dbReference>
<dbReference type="GO" id="GO:0009925">
    <property type="term" value="C:basal plasma membrane"/>
    <property type="evidence" value="ECO:0007669"/>
    <property type="project" value="UniProtKB-SubCell"/>
</dbReference>
<dbReference type="GO" id="GO:0005829">
    <property type="term" value="C:cytosol"/>
    <property type="evidence" value="ECO:0000250"/>
    <property type="project" value="FlyBase"/>
</dbReference>
<dbReference type="GO" id="GO:0016020">
    <property type="term" value="C:membrane"/>
    <property type="evidence" value="ECO:0000250"/>
    <property type="project" value="FlyBase"/>
</dbReference>
<dbReference type="GO" id="GO:0005085">
    <property type="term" value="F:guanyl-nucleotide exchange factor activity"/>
    <property type="evidence" value="ECO:0000316"/>
    <property type="project" value="FlyBase"/>
</dbReference>
<dbReference type="GO" id="GO:0008270">
    <property type="term" value="F:zinc ion binding"/>
    <property type="evidence" value="ECO:0000250"/>
    <property type="project" value="UniProtKB"/>
</dbReference>
<dbReference type="GO" id="GO:0061865">
    <property type="term" value="P:polarized secretion of basement membrane proteins in epithelium"/>
    <property type="evidence" value="ECO:0000315"/>
    <property type="project" value="FlyBase"/>
</dbReference>
<dbReference type="GO" id="GO:0006892">
    <property type="term" value="P:post-Golgi vesicle-mediated transport"/>
    <property type="evidence" value="ECO:0000318"/>
    <property type="project" value="GO_Central"/>
</dbReference>
<dbReference type="GO" id="GO:0015031">
    <property type="term" value="P:protein transport"/>
    <property type="evidence" value="ECO:0007669"/>
    <property type="project" value="UniProtKB-KW"/>
</dbReference>
<dbReference type="GO" id="GO:0007264">
    <property type="term" value="P:small GTPase-mediated signal transduction"/>
    <property type="evidence" value="ECO:0007669"/>
    <property type="project" value="InterPro"/>
</dbReference>
<dbReference type="FunFam" id="2.170.150.10:FF:000005">
    <property type="entry name" value="Guanine nucleotide exchange factor MSS4"/>
    <property type="match status" value="1"/>
</dbReference>
<dbReference type="Gene3D" id="2.170.150.10">
    <property type="entry name" value="Metal Binding Protein, Guanine Nucleotide Exchange Factor, Chain A"/>
    <property type="match status" value="1"/>
</dbReference>
<dbReference type="InterPro" id="IPR007515">
    <property type="entry name" value="Mss4"/>
</dbReference>
<dbReference type="InterPro" id="IPR011057">
    <property type="entry name" value="Mss4-like_sf"/>
</dbReference>
<dbReference type="InterPro" id="IPR011323">
    <property type="entry name" value="Mss4/transl-control_tumour"/>
</dbReference>
<dbReference type="PANTHER" id="PTHR13276">
    <property type="entry name" value="GUANINE NUCLEOTIDE EXCHANGE FACTOR MSS4"/>
    <property type="match status" value="1"/>
</dbReference>
<dbReference type="PANTHER" id="PTHR13276:SF0">
    <property type="entry name" value="GUANINE NUCLEOTIDE EXCHANGE FACTOR MSS4"/>
    <property type="match status" value="1"/>
</dbReference>
<dbReference type="Pfam" id="PF04421">
    <property type="entry name" value="Mss4"/>
    <property type="match status" value="1"/>
</dbReference>
<dbReference type="SUPFAM" id="SSF51316">
    <property type="entry name" value="Mss4-like"/>
    <property type="match status" value="1"/>
</dbReference>
<dbReference type="PROSITE" id="PS51796">
    <property type="entry name" value="MSS4"/>
    <property type="match status" value="1"/>
</dbReference>
<gene>
    <name evidence="3 4" type="primary">strat</name>
    <name evidence="4" type="ORF">CG7787</name>
</gene>
<organism>
    <name type="scientific">Drosophila melanogaster</name>
    <name type="common">Fruit fly</name>
    <dbReference type="NCBI Taxonomy" id="7227"/>
    <lineage>
        <taxon>Eukaryota</taxon>
        <taxon>Metazoa</taxon>
        <taxon>Ecdysozoa</taxon>
        <taxon>Arthropoda</taxon>
        <taxon>Hexapoda</taxon>
        <taxon>Insecta</taxon>
        <taxon>Pterygota</taxon>
        <taxon>Neoptera</taxon>
        <taxon>Endopterygota</taxon>
        <taxon>Diptera</taxon>
        <taxon>Brachycera</taxon>
        <taxon>Muscomorpha</taxon>
        <taxon>Ephydroidea</taxon>
        <taxon>Drosophilidae</taxon>
        <taxon>Drosophila</taxon>
        <taxon>Sophophora</taxon>
    </lineage>
</organism>
<accession>Q9VLP3</accession>
<accession>Q8IGQ8</accession>
<sequence>MTEEADFSEQITDGKNKSNVRCQFCNCLMLKAQEGTYNQEEVDVPLMTQKQDRTADSLNSEPLKDFWLVKDMMTFENIGFSNTVDGRKFLVCADCERGPVGYHDLSTRHCYLALKRVVHKDT</sequence>
<proteinExistence type="evidence at protein level"/>
<name>MSS4_DROME</name>
<protein>
    <recommendedName>
        <fullName evidence="3">Guanine nucleotide exchange factor MSS4 homolog</fullName>
    </recommendedName>
    <alternativeName>
        <fullName evidence="3">Guanine nucleotide exchange factor stratum</fullName>
    </alternativeName>
</protein>
<evidence type="ECO:0000255" key="1">
    <source>
        <dbReference type="PROSITE-ProRule" id="PRU01132"/>
    </source>
</evidence>
<evidence type="ECO:0000269" key="2">
    <source>
    </source>
</evidence>
<evidence type="ECO:0000303" key="3">
    <source>
    </source>
</evidence>
<evidence type="ECO:0000312" key="4">
    <source>
        <dbReference type="FlyBase" id="FBgn0032020"/>
    </source>
</evidence>
<feature type="chain" id="PRO_0000174178" description="Guanine nucleotide exchange factor MSS4 homolog">
    <location>
        <begin position="1"/>
        <end position="122"/>
    </location>
</feature>
<feature type="domain" description="MSS4" evidence="1">
    <location>
        <begin position="9"/>
        <end position="120"/>
    </location>
</feature>
<feature type="binding site" evidence="1">
    <location>
        <position position="22"/>
    </location>
    <ligand>
        <name>Zn(2+)</name>
        <dbReference type="ChEBI" id="CHEBI:29105"/>
    </ligand>
</feature>
<feature type="binding site" evidence="1">
    <location>
        <position position="25"/>
    </location>
    <ligand>
        <name>Zn(2+)</name>
        <dbReference type="ChEBI" id="CHEBI:29105"/>
    </ligand>
</feature>
<feature type="binding site" evidence="1">
    <location>
        <position position="92"/>
    </location>
    <ligand>
        <name>Zn(2+)</name>
        <dbReference type="ChEBI" id="CHEBI:29105"/>
    </ligand>
</feature>
<feature type="binding site" evidence="1">
    <location>
        <position position="95"/>
    </location>
    <ligand>
        <name>Zn(2+)</name>
        <dbReference type="ChEBI" id="CHEBI:29105"/>
    </ligand>
</feature>
<keyword id="KW-1003">Cell membrane</keyword>
<keyword id="KW-0344">Guanine-nucleotide releasing factor</keyword>
<keyword id="KW-0472">Membrane</keyword>
<keyword id="KW-0479">Metal-binding</keyword>
<keyword id="KW-0653">Protein transport</keyword>
<keyword id="KW-1185">Reference proteome</keyword>
<keyword id="KW-0813">Transport</keyword>
<keyword id="KW-0862">Zinc</keyword>